<keyword id="KW-0030">Aminoacyl-tRNA synthetase</keyword>
<keyword id="KW-0067">ATP-binding</keyword>
<keyword id="KW-0963">Cytoplasm</keyword>
<keyword id="KW-0436">Ligase</keyword>
<keyword id="KW-0547">Nucleotide-binding</keyword>
<keyword id="KW-0648">Protein biosynthesis</keyword>
<dbReference type="EC" id="6.1.1.21" evidence="1"/>
<dbReference type="EMBL" id="AE017194">
    <property type="protein sequence ID" value="AAS43387.1"/>
    <property type="molecule type" value="Genomic_DNA"/>
</dbReference>
<dbReference type="SMR" id="P62370"/>
<dbReference type="KEGG" id="bca:BCE_4486"/>
<dbReference type="HOGENOM" id="CLU_025113_1_1_9"/>
<dbReference type="Proteomes" id="UP000002527">
    <property type="component" value="Chromosome"/>
</dbReference>
<dbReference type="GO" id="GO:0005737">
    <property type="term" value="C:cytoplasm"/>
    <property type="evidence" value="ECO:0007669"/>
    <property type="project" value="UniProtKB-SubCell"/>
</dbReference>
<dbReference type="GO" id="GO:0005524">
    <property type="term" value="F:ATP binding"/>
    <property type="evidence" value="ECO:0007669"/>
    <property type="project" value="UniProtKB-UniRule"/>
</dbReference>
<dbReference type="GO" id="GO:0140096">
    <property type="term" value="F:catalytic activity, acting on a protein"/>
    <property type="evidence" value="ECO:0007669"/>
    <property type="project" value="UniProtKB-ARBA"/>
</dbReference>
<dbReference type="GO" id="GO:0004821">
    <property type="term" value="F:histidine-tRNA ligase activity"/>
    <property type="evidence" value="ECO:0007669"/>
    <property type="project" value="UniProtKB-UniRule"/>
</dbReference>
<dbReference type="GO" id="GO:0016740">
    <property type="term" value="F:transferase activity"/>
    <property type="evidence" value="ECO:0007669"/>
    <property type="project" value="UniProtKB-ARBA"/>
</dbReference>
<dbReference type="GO" id="GO:0006427">
    <property type="term" value="P:histidyl-tRNA aminoacylation"/>
    <property type="evidence" value="ECO:0007669"/>
    <property type="project" value="UniProtKB-UniRule"/>
</dbReference>
<dbReference type="CDD" id="cd00773">
    <property type="entry name" value="HisRS-like_core"/>
    <property type="match status" value="1"/>
</dbReference>
<dbReference type="CDD" id="cd00859">
    <property type="entry name" value="HisRS_anticodon"/>
    <property type="match status" value="1"/>
</dbReference>
<dbReference type="FunFam" id="3.30.930.10:FF:000005">
    <property type="entry name" value="Histidine--tRNA ligase"/>
    <property type="match status" value="1"/>
</dbReference>
<dbReference type="FunFam" id="3.40.50.800:FF:000013">
    <property type="entry name" value="Histidine--tRNA ligase"/>
    <property type="match status" value="1"/>
</dbReference>
<dbReference type="Gene3D" id="3.40.50.800">
    <property type="entry name" value="Anticodon-binding domain"/>
    <property type="match status" value="1"/>
</dbReference>
<dbReference type="Gene3D" id="3.30.930.10">
    <property type="entry name" value="Bira Bifunctional Protein, Domain 2"/>
    <property type="match status" value="1"/>
</dbReference>
<dbReference type="HAMAP" id="MF_00127">
    <property type="entry name" value="His_tRNA_synth"/>
    <property type="match status" value="1"/>
</dbReference>
<dbReference type="InterPro" id="IPR006195">
    <property type="entry name" value="aa-tRNA-synth_II"/>
</dbReference>
<dbReference type="InterPro" id="IPR045864">
    <property type="entry name" value="aa-tRNA-synth_II/BPL/LPL"/>
</dbReference>
<dbReference type="InterPro" id="IPR004154">
    <property type="entry name" value="Anticodon-bd"/>
</dbReference>
<dbReference type="InterPro" id="IPR036621">
    <property type="entry name" value="Anticodon-bd_dom_sf"/>
</dbReference>
<dbReference type="InterPro" id="IPR015807">
    <property type="entry name" value="His-tRNA-ligase"/>
</dbReference>
<dbReference type="InterPro" id="IPR041715">
    <property type="entry name" value="HisRS-like_core"/>
</dbReference>
<dbReference type="InterPro" id="IPR004516">
    <property type="entry name" value="HisRS/HisZ"/>
</dbReference>
<dbReference type="InterPro" id="IPR033656">
    <property type="entry name" value="HisRS_anticodon"/>
</dbReference>
<dbReference type="NCBIfam" id="TIGR00442">
    <property type="entry name" value="hisS"/>
    <property type="match status" value="1"/>
</dbReference>
<dbReference type="PANTHER" id="PTHR43707:SF1">
    <property type="entry name" value="HISTIDINE--TRNA LIGASE, MITOCHONDRIAL-RELATED"/>
    <property type="match status" value="1"/>
</dbReference>
<dbReference type="PANTHER" id="PTHR43707">
    <property type="entry name" value="HISTIDYL-TRNA SYNTHETASE"/>
    <property type="match status" value="1"/>
</dbReference>
<dbReference type="Pfam" id="PF03129">
    <property type="entry name" value="HGTP_anticodon"/>
    <property type="match status" value="1"/>
</dbReference>
<dbReference type="Pfam" id="PF13393">
    <property type="entry name" value="tRNA-synt_His"/>
    <property type="match status" value="1"/>
</dbReference>
<dbReference type="PIRSF" id="PIRSF001549">
    <property type="entry name" value="His-tRNA_synth"/>
    <property type="match status" value="1"/>
</dbReference>
<dbReference type="SUPFAM" id="SSF52954">
    <property type="entry name" value="Class II aaRS ABD-related"/>
    <property type="match status" value="1"/>
</dbReference>
<dbReference type="SUPFAM" id="SSF55681">
    <property type="entry name" value="Class II aaRS and biotin synthetases"/>
    <property type="match status" value="1"/>
</dbReference>
<dbReference type="PROSITE" id="PS50862">
    <property type="entry name" value="AA_TRNA_LIGASE_II"/>
    <property type="match status" value="1"/>
</dbReference>
<proteinExistence type="inferred from homology"/>
<evidence type="ECO:0000255" key="1">
    <source>
        <dbReference type="HAMAP-Rule" id="MF_00127"/>
    </source>
</evidence>
<name>SYH2_BACC1</name>
<protein>
    <recommendedName>
        <fullName evidence="1">Histidine--tRNA ligase 2</fullName>
        <ecNumber evidence="1">6.1.1.21</ecNumber>
    </recommendedName>
    <alternativeName>
        <fullName evidence="1">Histidyl-tRNA synthetase 2</fullName>
        <shortName evidence="1">HisRS 2</shortName>
    </alternativeName>
</protein>
<comment type="catalytic activity">
    <reaction evidence="1">
        <text>tRNA(His) + L-histidine + ATP = L-histidyl-tRNA(His) + AMP + diphosphate + H(+)</text>
        <dbReference type="Rhea" id="RHEA:17313"/>
        <dbReference type="Rhea" id="RHEA-COMP:9665"/>
        <dbReference type="Rhea" id="RHEA-COMP:9689"/>
        <dbReference type="ChEBI" id="CHEBI:15378"/>
        <dbReference type="ChEBI" id="CHEBI:30616"/>
        <dbReference type="ChEBI" id="CHEBI:33019"/>
        <dbReference type="ChEBI" id="CHEBI:57595"/>
        <dbReference type="ChEBI" id="CHEBI:78442"/>
        <dbReference type="ChEBI" id="CHEBI:78527"/>
        <dbReference type="ChEBI" id="CHEBI:456215"/>
        <dbReference type="EC" id="6.1.1.21"/>
    </reaction>
</comment>
<comment type="subunit">
    <text evidence="1">Homodimer.</text>
</comment>
<comment type="subcellular location">
    <subcellularLocation>
        <location evidence="1">Cytoplasm</location>
    </subcellularLocation>
</comment>
<comment type="similarity">
    <text evidence="1">Belongs to the class-II aminoacyl-tRNA synthetase family.</text>
</comment>
<feature type="chain" id="PRO_0000136096" description="Histidine--tRNA ligase 2">
    <location>
        <begin position="1"/>
        <end position="423"/>
    </location>
</feature>
<gene>
    <name evidence="1" type="primary">hisS2</name>
    <name type="ordered locus">BCE_4486</name>
</gene>
<sequence length="423" mass="47777">MSIQIPRGTQDILPGTVELWQYIEGQAREICRRYNYKEIRTPIFEHTELFLRGVGDTTDIVQKEMYSFQDRGERSLTLRPEGTAPVVRSYVENKMFGDATQPTKLYYIGQMFRYERPQAGRYRQFVQFGIEAIGSNDPAIDAEVIALAVEFYRGMGLKNIKVVLNSLGDAASRQAHRDALIAHFEPRIGEFCSDCQSRLEKNPLRILDCKKDRNHELMGTAPSITEYLNEDSAVYYEKVQELLTMMDVPFEKDPNLVRGLDYYQHTVFEIMSEAEGFGAITTLSGGGRYNGLVQEIGGPEMPGIGFAMSIERLIMALKAENIELPIEHSIDCYVVALGEKAKDHAAKVAFDLRKAGLSVEKDYLDRKMKAQFKSADRLKAKFVAVLGEDELDKGIINLKDMATGEQEEVALDVFASYVAEKLI</sequence>
<organism>
    <name type="scientific">Bacillus cereus (strain ATCC 10987 / NRS 248)</name>
    <dbReference type="NCBI Taxonomy" id="222523"/>
    <lineage>
        <taxon>Bacteria</taxon>
        <taxon>Bacillati</taxon>
        <taxon>Bacillota</taxon>
        <taxon>Bacilli</taxon>
        <taxon>Bacillales</taxon>
        <taxon>Bacillaceae</taxon>
        <taxon>Bacillus</taxon>
        <taxon>Bacillus cereus group</taxon>
    </lineage>
</organism>
<accession>P62370</accession>
<reference key="1">
    <citation type="journal article" date="2004" name="Nucleic Acids Res.">
        <title>The genome sequence of Bacillus cereus ATCC 10987 reveals metabolic adaptations and a large plasmid related to Bacillus anthracis pXO1.</title>
        <authorList>
            <person name="Rasko D.A."/>
            <person name="Ravel J."/>
            <person name="Oekstad O.A."/>
            <person name="Helgason E."/>
            <person name="Cer R.Z."/>
            <person name="Jiang L."/>
            <person name="Shores K.A."/>
            <person name="Fouts D.E."/>
            <person name="Tourasse N.J."/>
            <person name="Angiuoli S.V."/>
            <person name="Kolonay J.F."/>
            <person name="Nelson W.C."/>
            <person name="Kolstoe A.-B."/>
            <person name="Fraser C.M."/>
            <person name="Read T.D."/>
        </authorList>
    </citation>
    <scope>NUCLEOTIDE SEQUENCE [LARGE SCALE GENOMIC DNA]</scope>
    <source>
        <strain>ATCC 10987 / NRS 248</strain>
    </source>
</reference>